<proteinExistence type="evidence at protein level"/>
<accession>A6MWS7</accession>
<organism>
    <name type="scientific">Crinia riparia</name>
    <name type="common">Streambank froglet</name>
    <name type="synonym">Flinders Ranges froglet</name>
    <dbReference type="NCBI Taxonomy" id="446489"/>
    <lineage>
        <taxon>Eukaryota</taxon>
        <taxon>Metazoa</taxon>
        <taxon>Chordata</taxon>
        <taxon>Craniata</taxon>
        <taxon>Vertebrata</taxon>
        <taxon>Euteleostomi</taxon>
        <taxon>Amphibia</taxon>
        <taxon>Batrachia</taxon>
        <taxon>Anura</taxon>
        <taxon>Neobatrachia</taxon>
        <taxon>Myobatrachoidea</taxon>
        <taxon>Myobatrachidae</taxon>
        <taxon>Myobatrachinae</taxon>
        <taxon>Crinia</taxon>
    </lineage>
</organism>
<sequence>MKIIVVLAVLMLVSAQVCLVSAAEMGHSSDNELSSRDLVKRFFLPPCAYKGTCNH</sequence>
<dbReference type="EMBL" id="EF550516">
    <property type="protein sequence ID" value="ABQ88312.1"/>
    <property type="molecule type" value="mRNA"/>
</dbReference>
<dbReference type="SMR" id="A6MWS7"/>
<dbReference type="GO" id="GO:0005576">
    <property type="term" value="C:extracellular region"/>
    <property type="evidence" value="ECO:0000314"/>
    <property type="project" value="UniProtKB"/>
</dbReference>
<dbReference type="GO" id="GO:0006952">
    <property type="term" value="P:defense response"/>
    <property type="evidence" value="ECO:0007669"/>
    <property type="project" value="UniProtKB-KW"/>
</dbReference>
<keyword id="KW-0878">Amphibian defense peptide</keyword>
<keyword id="KW-0903">Direct protein sequencing</keyword>
<keyword id="KW-1015">Disulfide bond</keyword>
<keyword id="KW-0964">Secreted</keyword>
<keyword id="KW-0732">Signal</keyword>
<name>RIP14_CRIRI</name>
<protein>
    <recommendedName>
        <fullName>Riparin-1.4</fullName>
    </recommendedName>
</protein>
<evidence type="ECO:0000255" key="1"/>
<evidence type="ECO:0000269" key="2">
    <source>
    </source>
</evidence>
<evidence type="ECO:0000303" key="3">
    <source>
    </source>
</evidence>
<evidence type="ECO:0000305" key="4"/>
<evidence type="ECO:0000312" key="5">
    <source>
        <dbReference type="EMBL" id="ABQ88312.1"/>
    </source>
</evidence>
<reference evidence="4 5" key="1">
    <citation type="journal article" date="2008" name="Regul. Pept.">
        <title>Disulfide-containing peptides from the glandular skin secretions of froglets of the genus Crinia: structure, activity and evolutionary trends.</title>
        <authorList>
            <person name="Jackway R.J."/>
            <person name="Pukala T.L."/>
            <person name="Maselli V.M."/>
            <person name="Musgrave I.F."/>
            <person name="Bowie J.H."/>
            <person name="Liu Y."/>
            <person name="Surinya-Johnson K.H."/>
            <person name="Donnellan S.C."/>
            <person name="Doyle J.R."/>
            <person name="Llewellyn L.E."/>
            <person name="Tyler M.J."/>
        </authorList>
    </citation>
    <scope>NUCLEOTIDE SEQUENCE [MRNA]</scope>
    <scope>DISCUSSION OF SEQUENCE</scope>
    <source>
        <tissue evidence="5">Skin</tissue>
    </source>
</reference>
<reference evidence="4" key="2">
    <citation type="journal article" date="2006" name="Rapid Commun. Mass Spectrom.">
        <title>Host-defence skin peptides of the Australian streambank froglet Crinia riparia: isolation and sequence determination by positive and negative ion electrospray mass spectrometry.</title>
        <authorList>
            <person name="Maselli V.M."/>
            <person name="Bilusich D."/>
            <person name="Bowie J.H."/>
            <person name="Tyler M.J."/>
        </authorList>
    </citation>
    <scope>PROTEIN SEQUENCE OF 42-53</scope>
    <scope>SUBCELLULAR LOCATION</scope>
    <scope>TISSUE SPECIFICITY</scope>
    <scope>DISULFIDE BOND</scope>
    <source>
        <tissue evidence="2">Skin secretion</tissue>
    </source>
</reference>
<comment type="subcellular location">
    <subcellularLocation>
        <location evidence="2">Secreted</location>
    </subcellularLocation>
</comment>
<comment type="tissue specificity">
    <text evidence="2">Expressed by the skin glands.</text>
</comment>
<feature type="signal peptide" evidence="1 3">
    <location>
        <begin position="1"/>
        <end position="15"/>
    </location>
</feature>
<feature type="propeptide" id="PRO_0000371728" evidence="2">
    <location>
        <begin position="16"/>
        <end position="41"/>
    </location>
</feature>
<feature type="peptide" id="PRO_5000254167" description="Riparin-1.4">
    <location>
        <begin position="42"/>
        <end position="53"/>
    </location>
</feature>
<feature type="propeptide" id="PRO_0000371729" evidence="2">
    <location>
        <begin position="54"/>
        <end position="55"/>
    </location>
</feature>
<feature type="disulfide bond" evidence="2">
    <location>
        <begin position="47"/>
        <end position="53"/>
    </location>
</feature>